<protein>
    <recommendedName>
        <fullName>Zinc finger protein 281</fullName>
    </recommendedName>
    <alternativeName>
        <fullName>GC-box-binding zinc finger protein 1</fullName>
    </alternativeName>
    <alternativeName>
        <fullName>Transcription factor ZBP-99</fullName>
    </alternativeName>
    <alternativeName>
        <fullName>Zinc finger DNA-binding protein 99</fullName>
    </alternativeName>
</protein>
<evidence type="ECO:0000250" key="1"/>
<evidence type="ECO:0000255" key="2">
    <source>
        <dbReference type="PROSITE-ProRule" id="PRU00042"/>
    </source>
</evidence>
<evidence type="ECO:0000256" key="3">
    <source>
        <dbReference type="SAM" id="MobiDB-lite"/>
    </source>
</evidence>
<evidence type="ECO:0000269" key="4">
    <source>
    </source>
</evidence>
<evidence type="ECO:0000269" key="5">
    <source>
    </source>
</evidence>
<evidence type="ECO:0000269" key="6">
    <source>
    </source>
</evidence>
<evidence type="ECO:0000305" key="7"/>
<evidence type="ECO:0007744" key="8">
    <source>
    </source>
</evidence>
<evidence type="ECO:0007744" key="9">
    <source>
    </source>
</evidence>
<evidence type="ECO:0007744" key="10">
    <source>
    </source>
</evidence>
<evidence type="ECO:0007744" key="11">
    <source>
    </source>
</evidence>
<evidence type="ECO:0007744" key="12">
    <source>
    </source>
</evidence>
<evidence type="ECO:0007744" key="13">
    <source>
    </source>
</evidence>
<evidence type="ECO:0007744" key="14">
    <source>
    </source>
</evidence>
<evidence type="ECO:0007744" key="15">
    <source>
    </source>
</evidence>
<gene>
    <name type="primary">ZNF281</name>
    <name type="synonym">GZP1</name>
    <name type="synonym">ZBP99</name>
</gene>
<comment type="function">
    <text evidence="1 4 5">Transcription repressor that plays a role in regulation of embryonic stem cells (ESCs) differentiation. Required for ESCs differentiation and acts by mediating autorepression of NANOG in ESCs: binds to the NANOG promoter and promotes association of NANOG protein to its own promoter and recruits the NuRD complex, which deacetylates histones. Not required for establishement and maintenance of ESCs (By similarity). Represses the transcription of a number of genes including GAST, ODC1 and VIM. Binds to the G-rich box in the enhancer region of these genes.</text>
</comment>
<comment type="interaction">
    <interactant intactId="EBI-396200">
        <id>Q9Y2X9</id>
    </interactant>
    <interactant intactId="EBI-466029">
        <id>P42858</id>
        <label>HTT</label>
    </interactant>
    <organismsDiffer>false</organismsDiffer>
    <experiments>3</experiments>
</comment>
<comment type="interaction">
    <interactant intactId="EBI-396200">
        <id>Q9Y2X9</id>
    </interactant>
    <interactant intactId="EBI-748974">
        <id>Q96CV9</id>
        <label>OPTN</label>
    </interactant>
    <organismsDiffer>false</organismsDiffer>
    <experiments>3</experiments>
</comment>
<comment type="interaction">
    <interactant intactId="EBI-396200">
        <id>Q9Y2X9</id>
    </interactant>
    <interactant intactId="EBI-50433196">
        <id>A0A6Q8PF08</id>
        <label>PMP22</label>
    </interactant>
    <organismsDiffer>false</organismsDiffer>
    <experiments>3</experiments>
</comment>
<comment type="subcellular location">
    <subcellularLocation>
        <location evidence="4">Nucleus</location>
    </subcellularLocation>
</comment>
<comment type="alternative products">
    <event type="alternative splicing"/>
    <isoform>
        <id>Q9Y2X9-1</id>
        <name>1</name>
        <sequence type="displayed"/>
    </isoform>
    <isoform>
        <id>Q9Y2X9-2</id>
        <name>2</name>
        <sequence type="described" ref="VSP_054815"/>
    </isoform>
</comment>
<comment type="similarity">
    <text evidence="7">Belongs to the krueppel C2H2-type zinc-finger protein family.</text>
</comment>
<comment type="sequence caution" evidence="7">
    <conflict type="erroneous initiation">
        <sequence resource="EMBL-CDS" id="CAB70967"/>
    </conflict>
    <text>Extended N-terminus.</text>
</comment>
<keyword id="KW-0025">Alternative splicing</keyword>
<keyword id="KW-0221">Differentiation</keyword>
<keyword id="KW-0238">DNA-binding</keyword>
<keyword id="KW-1017">Isopeptide bond</keyword>
<keyword id="KW-0479">Metal-binding</keyword>
<keyword id="KW-0539">Nucleus</keyword>
<keyword id="KW-0597">Phosphoprotein</keyword>
<keyword id="KW-1267">Proteomics identification</keyword>
<keyword id="KW-1185">Reference proteome</keyword>
<keyword id="KW-0677">Repeat</keyword>
<keyword id="KW-0678">Repressor</keyword>
<keyword id="KW-0804">Transcription</keyword>
<keyword id="KW-0805">Transcription regulation</keyword>
<keyword id="KW-0832">Ubl conjugation</keyword>
<keyword id="KW-0862">Zinc</keyword>
<keyword id="KW-0863">Zinc-finger</keyword>
<reference key="1">
    <citation type="journal article" date="1999" name="Biochem. Biophys. Res. Commun.">
        <title>ZBP-99 defines a conserved family of transcription factors and regulates ornithine decarboxylase gene expression.</title>
        <authorList>
            <person name="Law D.J."/>
            <person name="Du M."/>
            <person name="Law G.L."/>
            <person name="Merchant J.L."/>
        </authorList>
    </citation>
    <scope>NUCLEOTIDE SEQUENCE [MRNA] (ISOFORM 1)</scope>
    <scope>FUNCTION</scope>
    <scope>SUBCELLULAR LOCATION</scope>
</reference>
<reference key="2">
    <citation type="journal article" date="1999" name="FEBS Lett.">
        <title>Identification of human GC-box-binding zinc finger protein, a new Krueppel-like zinc finger protein, by the yeast one-hybrid screening with a GC-rich target sequence.</title>
        <authorList>
            <person name="Lisowsky T."/>
            <person name="Loguercio Polosa P."/>
            <person name="Sagliano A."/>
            <person name="Roberti M."/>
            <person name="Gadaleta M.N."/>
            <person name="Cantatore P."/>
        </authorList>
    </citation>
    <scope>NUCLEOTIDE SEQUENCE [MRNA] (ISOFORM 1)</scope>
    <source>
        <tissue>Liver</tissue>
    </source>
</reference>
<reference key="3">
    <citation type="journal article" date="2004" name="Nat. Genet.">
        <title>Complete sequencing and characterization of 21,243 full-length human cDNAs.</title>
        <authorList>
            <person name="Ota T."/>
            <person name="Suzuki Y."/>
            <person name="Nishikawa T."/>
            <person name="Otsuki T."/>
            <person name="Sugiyama T."/>
            <person name="Irie R."/>
            <person name="Wakamatsu A."/>
            <person name="Hayashi K."/>
            <person name="Sato H."/>
            <person name="Nagai K."/>
            <person name="Kimura K."/>
            <person name="Makita H."/>
            <person name="Sekine M."/>
            <person name="Obayashi M."/>
            <person name="Nishi T."/>
            <person name="Shibahara T."/>
            <person name="Tanaka T."/>
            <person name="Ishii S."/>
            <person name="Yamamoto J."/>
            <person name="Saito K."/>
            <person name="Kawai Y."/>
            <person name="Isono Y."/>
            <person name="Nakamura Y."/>
            <person name="Nagahari K."/>
            <person name="Murakami K."/>
            <person name="Yasuda T."/>
            <person name="Iwayanagi T."/>
            <person name="Wagatsuma M."/>
            <person name="Shiratori A."/>
            <person name="Sudo H."/>
            <person name="Hosoiri T."/>
            <person name="Kaku Y."/>
            <person name="Kodaira H."/>
            <person name="Kondo H."/>
            <person name="Sugawara M."/>
            <person name="Takahashi M."/>
            <person name="Kanda K."/>
            <person name="Yokoi T."/>
            <person name="Furuya T."/>
            <person name="Kikkawa E."/>
            <person name="Omura Y."/>
            <person name="Abe K."/>
            <person name="Kamihara K."/>
            <person name="Katsuta N."/>
            <person name="Sato K."/>
            <person name="Tanikawa M."/>
            <person name="Yamazaki M."/>
            <person name="Ninomiya K."/>
            <person name="Ishibashi T."/>
            <person name="Yamashita H."/>
            <person name="Murakawa K."/>
            <person name="Fujimori K."/>
            <person name="Tanai H."/>
            <person name="Kimata M."/>
            <person name="Watanabe M."/>
            <person name="Hiraoka S."/>
            <person name="Chiba Y."/>
            <person name="Ishida S."/>
            <person name="Ono Y."/>
            <person name="Takiguchi S."/>
            <person name="Watanabe S."/>
            <person name="Yosida M."/>
            <person name="Hotuta T."/>
            <person name="Kusano J."/>
            <person name="Kanehori K."/>
            <person name="Takahashi-Fujii A."/>
            <person name="Hara H."/>
            <person name="Tanase T.-O."/>
            <person name="Nomura Y."/>
            <person name="Togiya S."/>
            <person name="Komai F."/>
            <person name="Hara R."/>
            <person name="Takeuchi K."/>
            <person name="Arita M."/>
            <person name="Imose N."/>
            <person name="Musashino K."/>
            <person name="Yuuki H."/>
            <person name="Oshima A."/>
            <person name="Sasaki N."/>
            <person name="Aotsuka S."/>
            <person name="Yoshikawa Y."/>
            <person name="Matsunawa H."/>
            <person name="Ichihara T."/>
            <person name="Shiohata N."/>
            <person name="Sano S."/>
            <person name="Moriya S."/>
            <person name="Momiyama H."/>
            <person name="Satoh N."/>
            <person name="Takami S."/>
            <person name="Terashima Y."/>
            <person name="Suzuki O."/>
            <person name="Nakagawa S."/>
            <person name="Senoh A."/>
            <person name="Mizoguchi H."/>
            <person name="Goto Y."/>
            <person name="Shimizu F."/>
            <person name="Wakebe H."/>
            <person name="Hishigaki H."/>
            <person name="Watanabe T."/>
            <person name="Sugiyama A."/>
            <person name="Takemoto M."/>
            <person name="Kawakami B."/>
            <person name="Yamazaki M."/>
            <person name="Watanabe K."/>
            <person name="Kumagai A."/>
            <person name="Itakura S."/>
            <person name="Fukuzumi Y."/>
            <person name="Fujimori Y."/>
            <person name="Komiyama M."/>
            <person name="Tashiro H."/>
            <person name="Tanigami A."/>
            <person name="Fujiwara T."/>
            <person name="Ono T."/>
            <person name="Yamada K."/>
            <person name="Fujii Y."/>
            <person name="Ozaki K."/>
            <person name="Hirao M."/>
            <person name="Ohmori Y."/>
            <person name="Kawabata A."/>
            <person name="Hikiji T."/>
            <person name="Kobatake N."/>
            <person name="Inagaki H."/>
            <person name="Ikema Y."/>
            <person name="Okamoto S."/>
            <person name="Okitani R."/>
            <person name="Kawakami T."/>
            <person name="Noguchi S."/>
            <person name="Itoh T."/>
            <person name="Shigeta K."/>
            <person name="Senba T."/>
            <person name="Matsumura K."/>
            <person name="Nakajima Y."/>
            <person name="Mizuno T."/>
            <person name="Morinaga M."/>
            <person name="Sasaki M."/>
            <person name="Togashi T."/>
            <person name="Oyama M."/>
            <person name="Hata H."/>
            <person name="Watanabe M."/>
            <person name="Komatsu T."/>
            <person name="Mizushima-Sugano J."/>
            <person name="Satoh T."/>
            <person name="Shirai Y."/>
            <person name="Takahashi Y."/>
            <person name="Nakagawa K."/>
            <person name="Okumura K."/>
            <person name="Nagase T."/>
            <person name="Nomura N."/>
            <person name="Kikuchi H."/>
            <person name="Masuho Y."/>
            <person name="Yamashita R."/>
            <person name="Nakai K."/>
            <person name="Yada T."/>
            <person name="Nakamura Y."/>
            <person name="Ohara O."/>
            <person name="Isogai T."/>
            <person name="Sugano S."/>
        </authorList>
    </citation>
    <scope>NUCLEOTIDE SEQUENCE [LARGE SCALE MRNA] (ISOFORM 1)</scope>
</reference>
<reference key="4">
    <citation type="journal article" date="2006" name="Nature">
        <title>The DNA sequence and biological annotation of human chromosome 1.</title>
        <authorList>
            <person name="Gregory S.G."/>
            <person name="Barlow K.F."/>
            <person name="McLay K.E."/>
            <person name="Kaul R."/>
            <person name="Swarbreck D."/>
            <person name="Dunham A."/>
            <person name="Scott C.E."/>
            <person name="Howe K.L."/>
            <person name="Woodfine K."/>
            <person name="Spencer C.C.A."/>
            <person name="Jones M.C."/>
            <person name="Gillson C."/>
            <person name="Searle S."/>
            <person name="Zhou Y."/>
            <person name="Kokocinski F."/>
            <person name="McDonald L."/>
            <person name="Evans R."/>
            <person name="Phillips K."/>
            <person name="Atkinson A."/>
            <person name="Cooper R."/>
            <person name="Jones C."/>
            <person name="Hall R.E."/>
            <person name="Andrews T.D."/>
            <person name="Lloyd C."/>
            <person name="Ainscough R."/>
            <person name="Almeida J.P."/>
            <person name="Ambrose K.D."/>
            <person name="Anderson F."/>
            <person name="Andrew R.W."/>
            <person name="Ashwell R.I.S."/>
            <person name="Aubin K."/>
            <person name="Babbage A.K."/>
            <person name="Bagguley C.L."/>
            <person name="Bailey J."/>
            <person name="Beasley H."/>
            <person name="Bethel G."/>
            <person name="Bird C.P."/>
            <person name="Bray-Allen S."/>
            <person name="Brown J.Y."/>
            <person name="Brown A.J."/>
            <person name="Buckley D."/>
            <person name="Burton J."/>
            <person name="Bye J."/>
            <person name="Carder C."/>
            <person name="Chapman J.C."/>
            <person name="Clark S.Y."/>
            <person name="Clarke G."/>
            <person name="Clee C."/>
            <person name="Cobley V."/>
            <person name="Collier R.E."/>
            <person name="Corby N."/>
            <person name="Coville G.J."/>
            <person name="Davies J."/>
            <person name="Deadman R."/>
            <person name="Dunn M."/>
            <person name="Earthrowl M."/>
            <person name="Ellington A.G."/>
            <person name="Errington H."/>
            <person name="Frankish A."/>
            <person name="Frankland J."/>
            <person name="French L."/>
            <person name="Garner P."/>
            <person name="Garnett J."/>
            <person name="Gay L."/>
            <person name="Ghori M.R.J."/>
            <person name="Gibson R."/>
            <person name="Gilby L.M."/>
            <person name="Gillett W."/>
            <person name="Glithero R.J."/>
            <person name="Grafham D.V."/>
            <person name="Griffiths C."/>
            <person name="Griffiths-Jones S."/>
            <person name="Grocock R."/>
            <person name="Hammond S."/>
            <person name="Harrison E.S.I."/>
            <person name="Hart E."/>
            <person name="Haugen E."/>
            <person name="Heath P.D."/>
            <person name="Holmes S."/>
            <person name="Holt K."/>
            <person name="Howden P.J."/>
            <person name="Hunt A.R."/>
            <person name="Hunt S.E."/>
            <person name="Hunter G."/>
            <person name="Isherwood J."/>
            <person name="James R."/>
            <person name="Johnson C."/>
            <person name="Johnson D."/>
            <person name="Joy A."/>
            <person name="Kay M."/>
            <person name="Kershaw J.K."/>
            <person name="Kibukawa M."/>
            <person name="Kimberley A.M."/>
            <person name="King A."/>
            <person name="Knights A.J."/>
            <person name="Lad H."/>
            <person name="Laird G."/>
            <person name="Lawlor S."/>
            <person name="Leongamornlert D.A."/>
            <person name="Lloyd D.M."/>
            <person name="Loveland J."/>
            <person name="Lovell J."/>
            <person name="Lush M.J."/>
            <person name="Lyne R."/>
            <person name="Martin S."/>
            <person name="Mashreghi-Mohammadi M."/>
            <person name="Matthews L."/>
            <person name="Matthews N.S.W."/>
            <person name="McLaren S."/>
            <person name="Milne S."/>
            <person name="Mistry S."/>
            <person name="Moore M.J.F."/>
            <person name="Nickerson T."/>
            <person name="O'Dell C.N."/>
            <person name="Oliver K."/>
            <person name="Palmeiri A."/>
            <person name="Palmer S.A."/>
            <person name="Parker A."/>
            <person name="Patel D."/>
            <person name="Pearce A.V."/>
            <person name="Peck A.I."/>
            <person name="Pelan S."/>
            <person name="Phelps K."/>
            <person name="Phillimore B.J."/>
            <person name="Plumb R."/>
            <person name="Rajan J."/>
            <person name="Raymond C."/>
            <person name="Rouse G."/>
            <person name="Saenphimmachak C."/>
            <person name="Sehra H.K."/>
            <person name="Sheridan E."/>
            <person name="Shownkeen R."/>
            <person name="Sims S."/>
            <person name="Skuce C.D."/>
            <person name="Smith M."/>
            <person name="Steward C."/>
            <person name="Subramanian S."/>
            <person name="Sycamore N."/>
            <person name="Tracey A."/>
            <person name="Tromans A."/>
            <person name="Van Helmond Z."/>
            <person name="Wall M."/>
            <person name="Wallis J.M."/>
            <person name="White S."/>
            <person name="Whitehead S.L."/>
            <person name="Wilkinson J.E."/>
            <person name="Willey D.L."/>
            <person name="Williams H."/>
            <person name="Wilming L."/>
            <person name="Wray P.W."/>
            <person name="Wu Z."/>
            <person name="Coulson A."/>
            <person name="Vaudin M."/>
            <person name="Sulston J.E."/>
            <person name="Durbin R.M."/>
            <person name="Hubbard T."/>
            <person name="Wooster R."/>
            <person name="Dunham I."/>
            <person name="Carter N.P."/>
            <person name="McVean G."/>
            <person name="Ross M.T."/>
            <person name="Harrow J."/>
            <person name="Olson M.V."/>
            <person name="Beck S."/>
            <person name="Rogers J."/>
            <person name="Bentley D.R."/>
        </authorList>
    </citation>
    <scope>NUCLEOTIDE SEQUENCE [LARGE SCALE GENOMIC DNA]</scope>
</reference>
<reference key="5">
    <citation type="journal article" date="2004" name="Genome Res.">
        <title>The status, quality, and expansion of the NIH full-length cDNA project: the Mammalian Gene Collection (MGC).</title>
        <authorList>
            <consortium name="The MGC Project Team"/>
        </authorList>
    </citation>
    <scope>NUCLEOTIDE SEQUENCE [LARGE SCALE MRNA] (ISOFORM 1)</scope>
    <source>
        <tissue>Placenta</tissue>
        <tissue>Skin</tissue>
    </source>
</reference>
<reference key="6">
    <citation type="journal article" date="2003" name="Nucleic Acids Res.">
        <title>ZBP-89 represses vimentin gene transcription by interacting with the transcriptional activator, Sp1.</title>
        <authorList>
            <person name="Zhang X."/>
            <person name="Diab I.H."/>
            <person name="Zehner Z.E."/>
        </authorList>
    </citation>
    <scope>FUNCTION</scope>
</reference>
<reference key="7">
    <citation type="journal article" date="2007" name="Science">
        <title>ATM and ATR substrate analysis reveals extensive protein networks responsive to DNA damage.</title>
        <authorList>
            <person name="Matsuoka S."/>
            <person name="Ballif B.A."/>
            <person name="Smogorzewska A."/>
            <person name="McDonald E.R. III"/>
            <person name="Hurov K.E."/>
            <person name="Luo J."/>
            <person name="Bakalarski C.E."/>
            <person name="Zhao Z."/>
            <person name="Solimini N."/>
            <person name="Lerenthal Y."/>
            <person name="Shiloh Y."/>
            <person name="Gygi S.P."/>
            <person name="Elledge S.J."/>
        </authorList>
    </citation>
    <scope>PHOSPHORYLATION [LARGE SCALE ANALYSIS] AT SER-395; SER-785 AND SER-807</scope>
    <scope>IDENTIFICATION BY MASS SPECTROMETRY [LARGE SCALE ANALYSIS]</scope>
    <source>
        <tissue>Embryonic kidney</tissue>
    </source>
</reference>
<reference key="8">
    <citation type="journal article" date="2008" name="Mol. Cell">
        <title>Kinase-selective enrichment enables quantitative phosphoproteomics of the kinome across the cell cycle.</title>
        <authorList>
            <person name="Daub H."/>
            <person name="Olsen J.V."/>
            <person name="Bairlein M."/>
            <person name="Gnad F."/>
            <person name="Oppermann F.S."/>
            <person name="Korner R."/>
            <person name="Greff Z."/>
            <person name="Keri G."/>
            <person name="Stemmann O."/>
            <person name="Mann M."/>
        </authorList>
    </citation>
    <scope>IDENTIFICATION BY MASS SPECTROMETRY [LARGE SCALE ANALYSIS]</scope>
    <source>
        <tissue>Cervix carcinoma</tissue>
    </source>
</reference>
<reference key="9">
    <citation type="journal article" date="2008" name="Proc. Natl. Acad. Sci. U.S.A.">
        <title>A quantitative atlas of mitotic phosphorylation.</title>
        <authorList>
            <person name="Dephoure N."/>
            <person name="Zhou C."/>
            <person name="Villen J."/>
            <person name="Beausoleil S.A."/>
            <person name="Bakalarski C.E."/>
            <person name="Elledge S.J."/>
            <person name="Gygi S.P."/>
        </authorList>
    </citation>
    <scope>PHOSPHORYLATION [LARGE SCALE ANALYSIS] AT SER-484</scope>
    <scope>IDENTIFICATION BY MASS SPECTROMETRY [LARGE SCALE ANALYSIS]</scope>
    <source>
        <tissue>Cervix carcinoma</tissue>
    </source>
</reference>
<reference key="10">
    <citation type="journal article" date="2009" name="Anal. Chem.">
        <title>Lys-N and trypsin cover complementary parts of the phosphoproteome in a refined SCX-based approach.</title>
        <authorList>
            <person name="Gauci S."/>
            <person name="Helbig A.O."/>
            <person name="Slijper M."/>
            <person name="Krijgsveld J."/>
            <person name="Heck A.J."/>
            <person name="Mohammed S."/>
        </authorList>
    </citation>
    <scope>IDENTIFICATION BY MASS SPECTROMETRY [LARGE SCALE ANALYSIS]</scope>
</reference>
<reference key="11">
    <citation type="journal article" date="2010" name="Sci. Signal.">
        <title>Quantitative phosphoproteomics reveals widespread full phosphorylation site occupancy during mitosis.</title>
        <authorList>
            <person name="Olsen J.V."/>
            <person name="Vermeulen M."/>
            <person name="Santamaria A."/>
            <person name="Kumar C."/>
            <person name="Miller M.L."/>
            <person name="Jensen L.J."/>
            <person name="Gnad F."/>
            <person name="Cox J."/>
            <person name="Jensen T.S."/>
            <person name="Nigg E.A."/>
            <person name="Brunak S."/>
            <person name="Mann M."/>
        </authorList>
    </citation>
    <scope>IDENTIFICATION BY MASS SPECTROMETRY [LARGE SCALE ANALYSIS]</scope>
    <source>
        <tissue>Cervix carcinoma</tissue>
    </source>
</reference>
<reference key="12">
    <citation type="journal article" date="2011" name="BMC Syst. Biol.">
        <title>Initial characterization of the human central proteome.</title>
        <authorList>
            <person name="Burkard T.R."/>
            <person name="Planyavsky M."/>
            <person name="Kaupe I."/>
            <person name="Breitwieser F.P."/>
            <person name="Buerckstuemmer T."/>
            <person name="Bennett K.L."/>
            <person name="Superti-Furga G."/>
            <person name="Colinge J."/>
        </authorList>
    </citation>
    <scope>IDENTIFICATION BY MASS SPECTROMETRY [LARGE SCALE ANALYSIS]</scope>
</reference>
<reference key="13">
    <citation type="journal article" date="2011" name="Sci. Signal.">
        <title>System-wide temporal characterization of the proteome and phosphoproteome of human embryonic stem cell differentiation.</title>
        <authorList>
            <person name="Rigbolt K.T."/>
            <person name="Prokhorova T.A."/>
            <person name="Akimov V."/>
            <person name="Henningsen J."/>
            <person name="Johansen P.T."/>
            <person name="Kratchmarova I."/>
            <person name="Kassem M."/>
            <person name="Mann M."/>
            <person name="Olsen J.V."/>
            <person name="Blagoev B."/>
        </authorList>
    </citation>
    <scope>IDENTIFICATION BY MASS SPECTROMETRY [LARGE SCALE ANALYSIS]</scope>
</reference>
<reference key="14">
    <citation type="journal article" date="2012" name="Proc. Natl. Acad. Sci. U.S.A.">
        <title>N-terminal acetylome analyses and functional insights of the N-terminal acetyltransferase NatB.</title>
        <authorList>
            <person name="Van Damme P."/>
            <person name="Lasa M."/>
            <person name="Polevoda B."/>
            <person name="Gazquez C."/>
            <person name="Elosegui-Artola A."/>
            <person name="Kim D.S."/>
            <person name="De Juan-Pardo E."/>
            <person name="Demeyer K."/>
            <person name="Hole K."/>
            <person name="Larrea E."/>
            <person name="Timmerman E."/>
            <person name="Prieto J."/>
            <person name="Arnesen T."/>
            <person name="Sherman F."/>
            <person name="Gevaert K."/>
            <person name="Aldabe R."/>
        </authorList>
    </citation>
    <scope>IDENTIFICATION BY MASS SPECTROMETRY [LARGE SCALE ANALYSIS]</scope>
</reference>
<reference key="15">
    <citation type="journal article" date="2013" name="J. Proteome Res.">
        <title>Toward a comprehensive characterization of a human cancer cell phosphoproteome.</title>
        <authorList>
            <person name="Zhou H."/>
            <person name="Di Palma S."/>
            <person name="Preisinger C."/>
            <person name="Peng M."/>
            <person name="Polat A.N."/>
            <person name="Heck A.J."/>
            <person name="Mohammed S."/>
        </authorList>
    </citation>
    <scope>PHOSPHORYLATION [LARGE SCALE ANALYSIS] AT SER-651</scope>
    <scope>IDENTIFICATION BY MASS SPECTROMETRY [LARGE SCALE ANALYSIS]</scope>
    <source>
        <tissue>Erythroleukemia</tissue>
    </source>
</reference>
<reference key="16">
    <citation type="journal article" date="2014" name="J. Proteomics">
        <title>An enzyme assisted RP-RPLC approach for in-depth analysis of human liver phosphoproteome.</title>
        <authorList>
            <person name="Bian Y."/>
            <person name="Song C."/>
            <person name="Cheng K."/>
            <person name="Dong M."/>
            <person name="Wang F."/>
            <person name="Huang J."/>
            <person name="Sun D."/>
            <person name="Wang L."/>
            <person name="Ye M."/>
            <person name="Zou H."/>
        </authorList>
    </citation>
    <scope>PHOSPHORYLATION [LARGE SCALE ANALYSIS] AT SER-651 AND THR-888</scope>
    <scope>IDENTIFICATION BY MASS SPECTROMETRY [LARGE SCALE ANALYSIS]</scope>
    <source>
        <tissue>Liver</tissue>
    </source>
</reference>
<reference key="17">
    <citation type="journal article" date="2014" name="Nat. Struct. Mol. Biol.">
        <title>Uncovering global SUMOylation signaling networks in a site-specific manner.</title>
        <authorList>
            <person name="Hendriks I.A."/>
            <person name="D'Souza R.C."/>
            <person name="Yang B."/>
            <person name="Verlaan-de Vries M."/>
            <person name="Mann M."/>
            <person name="Vertegaal A.C."/>
        </authorList>
    </citation>
    <scope>SUMOYLATION [LARGE SCALE ANALYSIS] AT LYS-128; LYS-213; LYS-232; LYS-409; LYS-416; LYS-622; LYS-787 AND LYS-795</scope>
    <scope>IDENTIFICATION BY MASS SPECTROMETRY [LARGE SCALE ANALYSIS]</scope>
</reference>
<reference key="18">
    <citation type="journal article" date="2015" name="Cell Rep.">
        <title>SUMO-2 orchestrates chromatin modifiers in response to DNA damage.</title>
        <authorList>
            <person name="Hendriks I.A."/>
            <person name="Treffers L.W."/>
            <person name="Verlaan-de Vries M."/>
            <person name="Olsen J.V."/>
            <person name="Vertegaal A.C."/>
        </authorList>
    </citation>
    <scope>SUMOYLATION [LARGE SCALE ANALYSIS] AT LYS-128; LYS-225; LYS-498 AND LYS-795</scope>
    <scope>IDENTIFICATION BY MASS SPECTROMETRY [LARGE SCALE ANALYSIS]</scope>
</reference>
<reference key="19">
    <citation type="journal article" date="2015" name="Mol. Cell. Proteomics">
        <title>System-wide analysis of SUMOylation dynamics in response to replication stress reveals novel small ubiquitin-like modified target proteins and acceptor lysines relevant for genome stability.</title>
        <authorList>
            <person name="Xiao Z."/>
            <person name="Chang J.G."/>
            <person name="Hendriks I.A."/>
            <person name="Sigurdsson J.O."/>
            <person name="Olsen J.V."/>
            <person name="Vertegaal A.C."/>
        </authorList>
    </citation>
    <scope>SUMOYLATION [LARGE SCALE ANALYSIS] AT LYS-128</scope>
    <scope>IDENTIFICATION BY MASS SPECTROMETRY [LARGE SCALE ANALYSIS]</scope>
</reference>
<reference key="20">
    <citation type="journal article" date="2017" name="Nat. Struct. Mol. Biol.">
        <title>Site-specific mapping of the human SUMO proteome reveals co-modification with phosphorylation.</title>
        <authorList>
            <person name="Hendriks I.A."/>
            <person name="Lyon D."/>
            <person name="Young C."/>
            <person name="Jensen L.J."/>
            <person name="Vertegaal A.C."/>
            <person name="Nielsen M.L."/>
        </authorList>
    </citation>
    <scope>SUMOYLATION [LARGE SCALE ANALYSIS] AT LYS-2; LYS-101; LYS-128; LYS-213; LYS-219; LYS-225; LYS-232; LYS-242; LYS-259; LYS-301; LYS-325; LYS-373; LYS-409; LYS-416; LYS-460; LYS-477; LYS-493; LYS-498; LYS-539; LYS-599; LYS-617; LYS-622; LYS-661; LYS-670; LYS-787; LYS-792; LYS-795; LYS-818 AND LYS-840</scope>
    <scope>SUMOYLATION [LARGE SCALE ANALYSIS] AT LYS-65 (ISOFORM 2)</scope>
    <scope>IDENTIFICATION BY MASS SPECTROMETRY [LARGE SCALE ANALYSIS]</scope>
</reference>
<reference key="21">
    <citation type="journal article" date="2006" name="Science">
        <title>The consensus coding sequences of human breast and colorectal cancers.</title>
        <authorList>
            <person name="Sjoeblom T."/>
            <person name="Jones S."/>
            <person name="Wood L.D."/>
            <person name="Parsons D.W."/>
            <person name="Lin J."/>
            <person name="Barber T.D."/>
            <person name="Mandelker D."/>
            <person name="Leary R.J."/>
            <person name="Ptak J."/>
            <person name="Silliman N."/>
            <person name="Szabo S."/>
            <person name="Buckhaults P."/>
            <person name="Farrell C."/>
            <person name="Meeh P."/>
            <person name="Markowitz S.D."/>
            <person name="Willis J."/>
            <person name="Dawson D."/>
            <person name="Willson J.K.V."/>
            <person name="Gazdar A.F."/>
            <person name="Hartigan J."/>
            <person name="Wu L."/>
            <person name="Liu C."/>
            <person name="Parmigiani G."/>
            <person name="Park B.H."/>
            <person name="Bachman K.E."/>
            <person name="Papadopoulos N."/>
            <person name="Vogelstein B."/>
            <person name="Kinzler K.W."/>
            <person name="Velculescu V.E."/>
        </authorList>
    </citation>
    <scope>VARIANT [LARGE SCALE ANALYSIS] THR-527</scope>
</reference>
<organism>
    <name type="scientific">Homo sapiens</name>
    <name type="common">Human</name>
    <dbReference type="NCBI Taxonomy" id="9606"/>
    <lineage>
        <taxon>Eukaryota</taxon>
        <taxon>Metazoa</taxon>
        <taxon>Chordata</taxon>
        <taxon>Craniata</taxon>
        <taxon>Vertebrata</taxon>
        <taxon>Euteleostomi</taxon>
        <taxon>Mammalia</taxon>
        <taxon>Eutheria</taxon>
        <taxon>Euarchontoglires</taxon>
        <taxon>Primates</taxon>
        <taxon>Haplorrhini</taxon>
        <taxon>Catarrhini</taxon>
        <taxon>Hominidae</taxon>
        <taxon>Homo</taxon>
    </lineage>
</organism>
<feature type="chain" id="PRO_0000047505" description="Zinc finger protein 281">
    <location>
        <begin position="1"/>
        <end position="895"/>
    </location>
</feature>
<feature type="zinc finger region" description="C2H2-type 1" evidence="2">
    <location>
        <begin position="261"/>
        <end position="283"/>
    </location>
</feature>
<feature type="zinc finger region" description="C2H2-type 2" evidence="2">
    <location>
        <begin position="289"/>
        <end position="311"/>
    </location>
</feature>
<feature type="zinc finger region" description="C2H2-type 3" evidence="2">
    <location>
        <begin position="317"/>
        <end position="339"/>
    </location>
</feature>
<feature type="zinc finger region" description="C2H2-type 4; atypical" evidence="2">
    <location>
        <begin position="345"/>
        <end position="367"/>
    </location>
</feature>
<feature type="region of interest" description="Disordered" evidence="3">
    <location>
        <begin position="1"/>
        <end position="44"/>
    </location>
</feature>
<feature type="region of interest" description="Disordered" evidence="3">
    <location>
        <begin position="63"/>
        <end position="113"/>
    </location>
</feature>
<feature type="region of interest" description="Disordered" evidence="3">
    <location>
        <begin position="130"/>
        <end position="149"/>
    </location>
</feature>
<feature type="region of interest" description="Disordered" evidence="3">
    <location>
        <begin position="183"/>
        <end position="253"/>
    </location>
</feature>
<feature type="region of interest" description="Disordered" evidence="3">
    <location>
        <begin position="377"/>
        <end position="427"/>
    </location>
</feature>
<feature type="region of interest" description="Disordered" evidence="3">
    <location>
        <begin position="638"/>
        <end position="660"/>
    </location>
</feature>
<feature type="region of interest" description="Disordered" evidence="3">
    <location>
        <begin position="778"/>
        <end position="817"/>
    </location>
</feature>
<feature type="compositionally biased region" description="Gly residues" evidence="3">
    <location>
        <begin position="7"/>
        <end position="36"/>
    </location>
</feature>
<feature type="compositionally biased region" description="Basic and acidic residues" evidence="3">
    <location>
        <begin position="130"/>
        <end position="140"/>
    </location>
</feature>
<feature type="compositionally biased region" description="Basic and acidic residues" evidence="3">
    <location>
        <begin position="202"/>
        <end position="218"/>
    </location>
</feature>
<feature type="compositionally biased region" description="Polar residues" evidence="3">
    <location>
        <begin position="379"/>
        <end position="398"/>
    </location>
</feature>
<feature type="compositionally biased region" description="Polar residues" evidence="3">
    <location>
        <begin position="648"/>
        <end position="660"/>
    </location>
</feature>
<feature type="compositionally biased region" description="Polar residues" evidence="3">
    <location>
        <begin position="778"/>
        <end position="789"/>
    </location>
</feature>
<feature type="compositionally biased region" description="Polar residues" evidence="3">
    <location>
        <begin position="797"/>
        <end position="815"/>
    </location>
</feature>
<feature type="modified residue" description="Phosphoserine" evidence="8">
    <location>
        <position position="395"/>
    </location>
</feature>
<feature type="modified residue" description="Phosphoserine" evidence="9">
    <location>
        <position position="484"/>
    </location>
</feature>
<feature type="modified residue" description="Phosphoserine" evidence="10 11">
    <location>
        <position position="651"/>
    </location>
</feature>
<feature type="modified residue" description="Phosphoserine" evidence="8">
    <location>
        <position position="785"/>
    </location>
</feature>
<feature type="modified residue" description="Phosphoserine" evidence="8">
    <location>
        <position position="807"/>
    </location>
</feature>
<feature type="modified residue" description="Phosphothreonine" evidence="11">
    <location>
        <position position="888"/>
    </location>
</feature>
<feature type="cross-link" description="Glycyl lysine isopeptide (Lys-Gly) (interchain with G-Cter in SUMO2)" evidence="15">
    <location>
        <position position="2"/>
    </location>
</feature>
<feature type="cross-link" description="Glycyl lysine isopeptide (Lys-Gly) (interchain with G-Cter in SUMO2)" evidence="15">
    <location>
        <position position="101"/>
    </location>
</feature>
<feature type="cross-link" description="Glycyl lysine isopeptide (Lys-Gly) (interchain with G-Cter in SUMO2)" evidence="12 13 14 15">
    <location>
        <position position="128"/>
    </location>
</feature>
<feature type="cross-link" description="Glycyl lysine isopeptide (Lys-Gly) (interchain with G-Cter in SUMO2)" evidence="12 15">
    <location>
        <position position="213"/>
    </location>
</feature>
<feature type="cross-link" description="Glycyl lysine isopeptide (Lys-Gly) (interchain with G-Cter in SUMO2)" evidence="15">
    <location>
        <position position="219"/>
    </location>
</feature>
<feature type="cross-link" description="Glycyl lysine isopeptide (Lys-Gly) (interchain with G-Cter in SUMO2)" evidence="14 15">
    <location>
        <position position="225"/>
    </location>
</feature>
<feature type="cross-link" description="Glycyl lysine isopeptide (Lys-Gly) (interchain with G-Cter in SUMO2)" evidence="12 15">
    <location>
        <position position="232"/>
    </location>
</feature>
<feature type="cross-link" description="Glycyl lysine isopeptide (Lys-Gly) (interchain with G-Cter in SUMO2)" evidence="15">
    <location>
        <position position="242"/>
    </location>
</feature>
<feature type="cross-link" description="Glycyl lysine isopeptide (Lys-Gly) (interchain with G-Cter in SUMO2)" evidence="15">
    <location>
        <position position="259"/>
    </location>
</feature>
<feature type="cross-link" description="Glycyl lysine isopeptide (Lys-Gly) (interchain with G-Cter in SUMO2)" evidence="15">
    <location>
        <position position="301"/>
    </location>
</feature>
<feature type="cross-link" description="Glycyl lysine isopeptide (Lys-Gly) (interchain with G-Cter in SUMO2)" evidence="15">
    <location>
        <position position="325"/>
    </location>
</feature>
<feature type="cross-link" description="Glycyl lysine isopeptide (Lys-Gly) (interchain with G-Cter in SUMO2)" evidence="15">
    <location>
        <position position="373"/>
    </location>
</feature>
<feature type="cross-link" description="Glycyl lysine isopeptide (Lys-Gly) (interchain with G-Cter in SUMO2)" evidence="12 15">
    <location>
        <position position="409"/>
    </location>
</feature>
<feature type="cross-link" description="Glycyl lysine isopeptide (Lys-Gly) (interchain with G-Cter in SUMO2)" evidence="12 15">
    <location>
        <position position="416"/>
    </location>
</feature>
<feature type="cross-link" description="Glycyl lysine isopeptide (Lys-Gly) (interchain with G-Cter in SUMO2)" evidence="15">
    <location>
        <position position="460"/>
    </location>
</feature>
<feature type="cross-link" description="Glycyl lysine isopeptide (Lys-Gly) (interchain with G-Cter in SUMO2)" evidence="15">
    <location>
        <position position="477"/>
    </location>
</feature>
<feature type="cross-link" description="Glycyl lysine isopeptide (Lys-Gly) (interchain with G-Cter in SUMO2)" evidence="15">
    <location>
        <position position="493"/>
    </location>
</feature>
<feature type="cross-link" description="Glycyl lysine isopeptide (Lys-Gly) (interchain with G-Cter in SUMO2)" evidence="14 15">
    <location>
        <position position="498"/>
    </location>
</feature>
<feature type="cross-link" description="Glycyl lysine isopeptide (Lys-Gly) (interchain with G-Cter in SUMO2)" evidence="15">
    <location>
        <position position="539"/>
    </location>
</feature>
<feature type="cross-link" description="Glycyl lysine isopeptide (Lys-Gly) (interchain with G-Cter in SUMO2)" evidence="15">
    <location>
        <position position="599"/>
    </location>
</feature>
<feature type="cross-link" description="Glycyl lysine isopeptide (Lys-Gly) (interchain with G-Cter in SUMO2)" evidence="15">
    <location>
        <position position="617"/>
    </location>
</feature>
<feature type="cross-link" description="Glycyl lysine isopeptide (Lys-Gly) (interchain with G-Cter in SUMO2)" evidence="12 15">
    <location>
        <position position="622"/>
    </location>
</feature>
<feature type="cross-link" description="Glycyl lysine isopeptide (Lys-Gly) (interchain with G-Cter in SUMO2)" evidence="15">
    <location>
        <position position="661"/>
    </location>
</feature>
<feature type="cross-link" description="Glycyl lysine isopeptide (Lys-Gly) (interchain with G-Cter in SUMO2)" evidence="15">
    <location>
        <position position="670"/>
    </location>
</feature>
<feature type="cross-link" description="Glycyl lysine isopeptide (Lys-Gly) (interchain with G-Cter in SUMO2)" evidence="12 15">
    <location>
        <position position="787"/>
    </location>
</feature>
<feature type="cross-link" description="Glycyl lysine isopeptide (Lys-Gly) (interchain with G-Cter in SUMO2)" evidence="15">
    <location>
        <position position="792"/>
    </location>
</feature>
<feature type="cross-link" description="Glycyl lysine isopeptide (Lys-Gly) (interchain with G-Cter in SUMO2)" evidence="12 14 15">
    <location>
        <position position="795"/>
    </location>
</feature>
<feature type="cross-link" description="Glycyl lysine isopeptide (Lys-Gly) (interchain with G-Cter in SUMO2)" evidence="15">
    <location>
        <position position="818"/>
    </location>
</feature>
<feature type="cross-link" description="Glycyl lysine isopeptide (Lys-Gly) (interchain with G-Cter in SUMO2)" evidence="15">
    <location>
        <position position="840"/>
    </location>
</feature>
<feature type="splice variant" id="VSP_054815" description="In isoform 2." evidence="7">
    <location>
        <begin position="49"/>
        <end position="84"/>
    </location>
</feature>
<feature type="sequence variant" id="VAR_035576" description="In a breast cancer sample; somatic mutation." evidence="6">
    <original>I</original>
    <variation>T</variation>
    <location>
        <position position="527"/>
    </location>
</feature>
<feature type="sequence conflict" description="In Ref. 3; BAG51134." evidence="7" ref="3">
    <original>F</original>
    <variation>L</variation>
    <location>
        <position position="63"/>
    </location>
</feature>
<feature type="sequence conflict" description="In Ref. 5; AAH51905." evidence="7" ref="5">
    <original>H</original>
    <variation>Y</variation>
    <location>
        <position position="206"/>
    </location>
</feature>
<feature type="sequence conflict" description="In Ref. 3; BAG51134." evidence="7" ref="3">
    <original>F</original>
    <variation>L</variation>
    <location>
        <position position="482"/>
    </location>
</feature>
<feature type="sequence conflict" description="In Ref. 3; BAG51134." evidence="7" ref="3">
    <original>L</original>
    <variation>I</variation>
    <location>
        <position position="635"/>
    </location>
</feature>
<feature type="cross-link" description="Glycyl lysine isopeptide (Lys-Gly) (interchain with G-Cter in SUMO2)" evidence="15">
    <location sequence="Q9Y2X9-2">
        <position position="65"/>
    </location>
</feature>
<accession>Q9Y2X9</accession>
<accession>A6NF48</accession>
<accession>B3KMX2</accession>
<accession>Q5RKW5</accession>
<accession>Q9NY92</accession>
<dbReference type="EMBL" id="AF125158">
    <property type="protein sequence ID" value="AAD21084.1"/>
    <property type="molecule type" value="mRNA"/>
</dbReference>
<dbReference type="EMBL" id="AJ132591">
    <property type="protein sequence ID" value="CAB70967.1"/>
    <property type="status" value="ALT_INIT"/>
    <property type="molecule type" value="mRNA"/>
</dbReference>
<dbReference type="EMBL" id="AJ132592">
    <property type="protein sequence ID" value="CAB70968.1"/>
    <property type="molecule type" value="mRNA"/>
</dbReference>
<dbReference type="EMBL" id="AK022916">
    <property type="protein sequence ID" value="BAG51134.1"/>
    <property type="molecule type" value="mRNA"/>
</dbReference>
<dbReference type="EMBL" id="AC104461">
    <property type="status" value="NOT_ANNOTATED_CDS"/>
    <property type="molecule type" value="Genomic_DNA"/>
</dbReference>
<dbReference type="EMBL" id="BC051905">
    <property type="protein sequence ID" value="AAH51905.1"/>
    <property type="molecule type" value="mRNA"/>
</dbReference>
<dbReference type="EMBL" id="BC060820">
    <property type="protein sequence ID" value="AAH60820.1"/>
    <property type="molecule type" value="mRNA"/>
</dbReference>
<dbReference type="CCDS" id="CCDS1402.1">
    <molecule id="Q9Y2X9-1"/>
</dbReference>
<dbReference type="CCDS" id="CCDS60384.1">
    <molecule id="Q9Y2X9-2"/>
</dbReference>
<dbReference type="PIR" id="JC7089">
    <property type="entry name" value="JC7089"/>
</dbReference>
<dbReference type="RefSeq" id="NP_001268222.1">
    <molecule id="Q9Y2X9-1"/>
    <property type="nucleotide sequence ID" value="NM_001281293.2"/>
</dbReference>
<dbReference type="RefSeq" id="NP_001268223.1">
    <molecule id="Q9Y2X9-2"/>
    <property type="nucleotide sequence ID" value="NM_001281294.2"/>
</dbReference>
<dbReference type="RefSeq" id="NP_036614.1">
    <molecule id="Q9Y2X9-1"/>
    <property type="nucleotide sequence ID" value="NM_012482.5"/>
</dbReference>
<dbReference type="RefSeq" id="XP_016856376.1">
    <property type="nucleotide sequence ID" value="XM_017000887.1"/>
</dbReference>
<dbReference type="RefSeq" id="XP_016856377.1">
    <property type="nucleotide sequence ID" value="XM_017000888.1"/>
</dbReference>
<dbReference type="RefSeq" id="XP_054191681.1">
    <molecule id="Q9Y2X9-1"/>
    <property type="nucleotide sequence ID" value="XM_054335706.1"/>
</dbReference>
<dbReference type="RefSeq" id="XP_054191682.1">
    <molecule id="Q9Y2X9-1"/>
    <property type="nucleotide sequence ID" value="XM_054335707.1"/>
</dbReference>
<dbReference type="RefSeq" id="XP_054191683.1">
    <molecule id="Q9Y2X9-1"/>
    <property type="nucleotide sequence ID" value="XM_054335708.1"/>
</dbReference>
<dbReference type="SMR" id="Q9Y2X9"/>
<dbReference type="BioGRID" id="117074">
    <property type="interactions" value="176"/>
</dbReference>
<dbReference type="CORUM" id="Q9Y2X9"/>
<dbReference type="ELM" id="Q9Y2X9"/>
<dbReference type="FunCoup" id="Q9Y2X9">
    <property type="interactions" value="3952"/>
</dbReference>
<dbReference type="IntAct" id="Q9Y2X9">
    <property type="interactions" value="143"/>
</dbReference>
<dbReference type="MINT" id="Q9Y2X9"/>
<dbReference type="STRING" id="9606.ENSP00000294740"/>
<dbReference type="GlyConnect" id="2864">
    <property type="glycosylation" value="1 O-GlcNAc glycan (1 site)"/>
</dbReference>
<dbReference type="GlyCosmos" id="Q9Y2X9">
    <property type="glycosylation" value="22 sites, 2 glycans"/>
</dbReference>
<dbReference type="GlyGen" id="Q9Y2X9">
    <property type="glycosylation" value="29 sites, 2 O-linked glycans (29 sites)"/>
</dbReference>
<dbReference type="iPTMnet" id="Q9Y2X9"/>
<dbReference type="PhosphoSitePlus" id="Q9Y2X9"/>
<dbReference type="BioMuta" id="ZNF281"/>
<dbReference type="DMDM" id="13124664"/>
<dbReference type="jPOST" id="Q9Y2X9"/>
<dbReference type="MassIVE" id="Q9Y2X9"/>
<dbReference type="PaxDb" id="9606-ENSP00000294740"/>
<dbReference type="PeptideAtlas" id="Q9Y2X9"/>
<dbReference type="ProteomicsDB" id="1027"/>
<dbReference type="ProteomicsDB" id="85932">
    <molecule id="Q9Y2X9-1"/>
</dbReference>
<dbReference type="Pumba" id="Q9Y2X9"/>
<dbReference type="Antibodypedia" id="20632">
    <property type="antibodies" value="200 antibodies from 32 providers"/>
</dbReference>
<dbReference type="DNASU" id="23528"/>
<dbReference type="Ensembl" id="ENST00000294740.3">
    <molecule id="Q9Y2X9-1"/>
    <property type="protein sequence ID" value="ENSP00000294740.2"/>
    <property type="gene ID" value="ENSG00000162702.8"/>
</dbReference>
<dbReference type="Ensembl" id="ENST00000367352.3">
    <molecule id="Q9Y2X9-2"/>
    <property type="protein sequence ID" value="ENSP00000356321.3"/>
    <property type="gene ID" value="ENSG00000162702.8"/>
</dbReference>
<dbReference type="Ensembl" id="ENST00000367353.2">
    <molecule id="Q9Y2X9-1"/>
    <property type="protein sequence ID" value="ENSP00000356322.1"/>
    <property type="gene ID" value="ENSG00000162702.8"/>
</dbReference>
<dbReference type="GeneID" id="23528"/>
<dbReference type="KEGG" id="hsa:23528"/>
<dbReference type="MANE-Select" id="ENST00000367353.2">
    <property type="protein sequence ID" value="ENSP00000356322.1"/>
    <property type="RefSeq nucleotide sequence ID" value="NM_001281293.2"/>
    <property type="RefSeq protein sequence ID" value="NP_001268222.1"/>
</dbReference>
<dbReference type="UCSC" id="uc001gve.5">
    <molecule id="Q9Y2X9-1"/>
    <property type="organism name" value="human"/>
</dbReference>
<dbReference type="AGR" id="HGNC:13075"/>
<dbReference type="CTD" id="23528"/>
<dbReference type="DisGeNET" id="23528"/>
<dbReference type="GeneCards" id="ZNF281"/>
<dbReference type="HGNC" id="HGNC:13075">
    <property type="gene designation" value="ZNF281"/>
</dbReference>
<dbReference type="HPA" id="ENSG00000162702">
    <property type="expression patterns" value="Tissue enhanced (bone)"/>
</dbReference>
<dbReference type="MIM" id="618703">
    <property type="type" value="gene"/>
</dbReference>
<dbReference type="neXtProt" id="NX_Q9Y2X9"/>
<dbReference type="OpenTargets" id="ENSG00000162702"/>
<dbReference type="PharmGKB" id="PA37651"/>
<dbReference type="VEuPathDB" id="HostDB:ENSG00000162702"/>
<dbReference type="eggNOG" id="KOG1721">
    <property type="taxonomic scope" value="Eukaryota"/>
</dbReference>
<dbReference type="GeneTree" id="ENSGT00940000161586"/>
<dbReference type="HOGENOM" id="CLU_017625_0_0_1"/>
<dbReference type="InParanoid" id="Q9Y2X9"/>
<dbReference type="OMA" id="FPPGMVM"/>
<dbReference type="OrthoDB" id="9899552at2759"/>
<dbReference type="PAN-GO" id="Q9Y2X9">
    <property type="GO annotations" value="3 GO annotations based on evolutionary models"/>
</dbReference>
<dbReference type="PhylomeDB" id="Q9Y2X9"/>
<dbReference type="TreeFam" id="TF331779"/>
<dbReference type="PathwayCommons" id="Q9Y2X9"/>
<dbReference type="SignaLink" id="Q9Y2X9"/>
<dbReference type="SIGNOR" id="Q9Y2X9"/>
<dbReference type="BioGRID-ORCS" id="23528">
    <property type="hits" value="26 hits in 1174 CRISPR screens"/>
</dbReference>
<dbReference type="ChiTaRS" id="ZNF281">
    <property type="organism name" value="human"/>
</dbReference>
<dbReference type="GeneWiki" id="ZNF281"/>
<dbReference type="GenomeRNAi" id="23528"/>
<dbReference type="Pharos" id="Q9Y2X9">
    <property type="development level" value="Tbio"/>
</dbReference>
<dbReference type="PRO" id="PR:Q9Y2X9"/>
<dbReference type="Proteomes" id="UP000005640">
    <property type="component" value="Chromosome 1"/>
</dbReference>
<dbReference type="RNAct" id="Q9Y2X9">
    <property type="molecule type" value="protein"/>
</dbReference>
<dbReference type="Bgee" id="ENSG00000162702">
    <property type="expression patterns" value="Expressed in secondary oocyte and 206 other cell types or tissues"/>
</dbReference>
<dbReference type="GO" id="GO:0005654">
    <property type="term" value="C:nucleoplasm"/>
    <property type="evidence" value="ECO:0000314"/>
    <property type="project" value="HPA"/>
</dbReference>
<dbReference type="GO" id="GO:0005634">
    <property type="term" value="C:nucleus"/>
    <property type="evidence" value="ECO:0000314"/>
    <property type="project" value="UniProtKB"/>
</dbReference>
<dbReference type="GO" id="GO:0003700">
    <property type="term" value="F:DNA-binding transcription factor activity"/>
    <property type="evidence" value="ECO:0000314"/>
    <property type="project" value="UniProtKB"/>
</dbReference>
<dbReference type="GO" id="GO:0000981">
    <property type="term" value="F:DNA-binding transcription factor activity, RNA polymerase II-specific"/>
    <property type="evidence" value="ECO:0000318"/>
    <property type="project" value="GO_Central"/>
</dbReference>
<dbReference type="GO" id="GO:0001227">
    <property type="term" value="F:DNA-binding transcription repressor activity, RNA polymerase II-specific"/>
    <property type="evidence" value="ECO:0000314"/>
    <property type="project" value="NTNU_SB"/>
</dbReference>
<dbReference type="GO" id="GO:0000978">
    <property type="term" value="F:RNA polymerase II cis-regulatory region sequence-specific DNA binding"/>
    <property type="evidence" value="ECO:0000314"/>
    <property type="project" value="NTNU_SB"/>
</dbReference>
<dbReference type="GO" id="GO:0043565">
    <property type="term" value="F:sequence-specific DNA binding"/>
    <property type="evidence" value="ECO:0000314"/>
    <property type="project" value="UniProtKB"/>
</dbReference>
<dbReference type="GO" id="GO:1990837">
    <property type="term" value="F:sequence-specific double-stranded DNA binding"/>
    <property type="evidence" value="ECO:0000314"/>
    <property type="project" value="ARUK-UCL"/>
</dbReference>
<dbReference type="GO" id="GO:0000976">
    <property type="term" value="F:transcription cis-regulatory region binding"/>
    <property type="evidence" value="ECO:0000314"/>
    <property type="project" value="UniProtKB"/>
</dbReference>
<dbReference type="GO" id="GO:0008270">
    <property type="term" value="F:zinc ion binding"/>
    <property type="evidence" value="ECO:0007669"/>
    <property type="project" value="UniProtKB-KW"/>
</dbReference>
<dbReference type="GO" id="GO:0010172">
    <property type="term" value="P:embryonic body morphogenesis"/>
    <property type="evidence" value="ECO:0000250"/>
    <property type="project" value="UniProtKB"/>
</dbReference>
<dbReference type="GO" id="GO:0045892">
    <property type="term" value="P:negative regulation of DNA-templated transcription"/>
    <property type="evidence" value="ECO:0000314"/>
    <property type="project" value="UniProtKB"/>
</dbReference>
<dbReference type="GO" id="GO:0010629">
    <property type="term" value="P:negative regulation of gene expression"/>
    <property type="evidence" value="ECO:0000314"/>
    <property type="project" value="UniProtKB"/>
</dbReference>
<dbReference type="GO" id="GO:0000122">
    <property type="term" value="P:negative regulation of transcription by RNA polymerase II"/>
    <property type="evidence" value="ECO:0000314"/>
    <property type="project" value="NTNU_SB"/>
</dbReference>
<dbReference type="GO" id="GO:0045893">
    <property type="term" value="P:positive regulation of DNA-templated transcription"/>
    <property type="evidence" value="ECO:0000314"/>
    <property type="project" value="UniProtKB"/>
</dbReference>
<dbReference type="GO" id="GO:0006355">
    <property type="term" value="P:regulation of DNA-templated transcription"/>
    <property type="evidence" value="ECO:0000318"/>
    <property type="project" value="GO_Central"/>
</dbReference>
<dbReference type="GO" id="GO:0048863">
    <property type="term" value="P:stem cell differentiation"/>
    <property type="evidence" value="ECO:0000250"/>
    <property type="project" value="UniProtKB"/>
</dbReference>
<dbReference type="FunFam" id="3.30.160.60:FF:000067">
    <property type="entry name" value="Vascular endothelial zinc finger 1"/>
    <property type="match status" value="1"/>
</dbReference>
<dbReference type="FunFam" id="3.30.160.60:FF:000042">
    <property type="entry name" value="Zinc finger protein 148"/>
    <property type="match status" value="1"/>
</dbReference>
<dbReference type="FunFam" id="3.30.160.60:FF:000313">
    <property type="entry name" value="Zinc finger protein 281"/>
    <property type="match status" value="1"/>
</dbReference>
<dbReference type="FunFam" id="3.30.160.60:FF:000624">
    <property type="entry name" value="zinc finger protein 697"/>
    <property type="match status" value="1"/>
</dbReference>
<dbReference type="Gene3D" id="3.30.160.60">
    <property type="entry name" value="Classic Zinc Finger"/>
    <property type="match status" value="4"/>
</dbReference>
<dbReference type="InterPro" id="IPR050826">
    <property type="entry name" value="Krueppel_C2H2_ZnFinger"/>
</dbReference>
<dbReference type="InterPro" id="IPR036236">
    <property type="entry name" value="Znf_C2H2_sf"/>
</dbReference>
<dbReference type="InterPro" id="IPR013087">
    <property type="entry name" value="Znf_C2H2_type"/>
</dbReference>
<dbReference type="PANTHER" id="PTHR24377">
    <property type="entry name" value="IP01015P-RELATED"/>
    <property type="match status" value="1"/>
</dbReference>
<dbReference type="Pfam" id="PF00096">
    <property type="entry name" value="zf-C2H2"/>
    <property type="match status" value="2"/>
</dbReference>
<dbReference type="SMART" id="SM00355">
    <property type="entry name" value="ZnF_C2H2"/>
    <property type="match status" value="4"/>
</dbReference>
<dbReference type="SUPFAM" id="SSF57667">
    <property type="entry name" value="beta-beta-alpha zinc fingers"/>
    <property type="match status" value="2"/>
</dbReference>
<dbReference type="PROSITE" id="PS00028">
    <property type="entry name" value="ZINC_FINGER_C2H2_1"/>
    <property type="match status" value="3"/>
</dbReference>
<dbReference type="PROSITE" id="PS50157">
    <property type="entry name" value="ZINC_FINGER_C2H2_2"/>
    <property type="match status" value="4"/>
</dbReference>
<sequence length="895" mass="96915">MKIGSGFLSGGGGTGSSGGSGSGGGGSGGGGGGGSSGRRAEMEPTFPQGMVMFNHRLPPVTSFTRPAGSAAPPPQCVLSSSTSAAPAAEPPPPPAPDMTFKKEPAASAAAFPSQRTSWGFLQSLVSIKQEKPADPEEQQSHHHHHHHHYGGLFAGAEERSPGLGGGEGGSHGVIQDLSILHQHVQQQPAQHHRDVLLSSSSRTDDHHGTEEPKQDTNVKKAKRPKPESQGIKAKRKPSASSKPSLVGDGEGAILSPSQKPHICDHCSAAFRSSYHLRRHVLIHTGERPFQCSQCSMGFIQKYLLQRHEKIHSREKPFGCDQCSMKFIQKYHMERHKRTHSGEKPYKCDTCQQYFSRTDRLLKHRRTCGEVIVKGATSAEPGSSNHTNMGNLAVLSQGNTSSSRRKTKSKSIAIENKEQKTGKTNESQISNNINMQSYSVEMPTVSSSGGIIGTGIDELQKRVPKLIFKKGSRKNTDKNYLNFVSPLPDIVGQKSLSGKPSGSLGIVSNNSVETIGLLQSTSGKQGQISSNYDDAMQFSKKRRYLPTASSNSAFSINVGHMVSQQSVIQSAGVSVLDNEAPLSLIDSSALNAEIKSCHDKSGIPDEVLQSILDQYSNKSESQKEDPFNIAEPRVDLHTSGEHSELVQEENLSPGTQTPSNDKASMLQEYSKYLQQAFEKSTNASFTLGHGFQFVSLSSPLHNHTLFPEKQIYTTSPLECGFGQSVTSVLPSSLPKPPFGMLFGSQPGLYLSALDATHQQLTPSQELDDLIDSQKNLETSSAFQSSSQKLTSQKEQKNLESSTGFQIPSQELASQIDPQKDIEPRTTYQIENFAQAFGSQFKSGSRVPMTFITNSNGEVDHRVRTSVSDFSGYTNMMSDVSEPCSTRVKTPTSQSYR</sequence>
<name>ZN281_HUMAN</name>
<proteinExistence type="evidence at protein level"/>